<comment type="function">
    <text evidence="1">Involved in the biosynthesis of the chorismate, which leads to the biosynthesis of aromatic amino acids. Catalyzes the reversible NADPH linked reduction of 3-dehydroshikimate (DHSA) to yield shikimate (SA).</text>
</comment>
<comment type="catalytic activity">
    <reaction evidence="1">
        <text>shikimate + NADP(+) = 3-dehydroshikimate + NADPH + H(+)</text>
        <dbReference type="Rhea" id="RHEA:17737"/>
        <dbReference type="ChEBI" id="CHEBI:15378"/>
        <dbReference type="ChEBI" id="CHEBI:16630"/>
        <dbReference type="ChEBI" id="CHEBI:36208"/>
        <dbReference type="ChEBI" id="CHEBI:57783"/>
        <dbReference type="ChEBI" id="CHEBI:58349"/>
        <dbReference type="EC" id="1.1.1.25"/>
    </reaction>
</comment>
<comment type="pathway">
    <text evidence="1">Metabolic intermediate biosynthesis; chorismate biosynthesis; chorismate from D-erythrose 4-phosphate and phosphoenolpyruvate: step 4/7.</text>
</comment>
<comment type="subunit">
    <text evidence="1">Homodimer.</text>
</comment>
<comment type="similarity">
    <text evidence="1">Belongs to the shikimate dehydrogenase family.</text>
</comment>
<accession>B1WUG7</accession>
<evidence type="ECO:0000255" key="1">
    <source>
        <dbReference type="HAMAP-Rule" id="MF_00222"/>
    </source>
</evidence>
<protein>
    <recommendedName>
        <fullName evidence="1">Shikimate dehydrogenase (NADP(+))</fullName>
        <shortName evidence="1">SDH</shortName>
        <ecNumber evidence="1">1.1.1.25</ecNumber>
    </recommendedName>
</protein>
<dbReference type="EC" id="1.1.1.25" evidence="1"/>
<dbReference type="EMBL" id="CP000806">
    <property type="protein sequence ID" value="ACB53821.1"/>
    <property type="molecule type" value="Genomic_DNA"/>
</dbReference>
<dbReference type="RefSeq" id="WP_009543473.1">
    <property type="nucleotide sequence ID" value="NC_010546.1"/>
</dbReference>
<dbReference type="SMR" id="B1WUG7"/>
<dbReference type="STRING" id="43989.cce_4473"/>
<dbReference type="KEGG" id="cyt:cce_4473"/>
<dbReference type="eggNOG" id="COG0169">
    <property type="taxonomic scope" value="Bacteria"/>
</dbReference>
<dbReference type="HOGENOM" id="CLU_044063_4_1_3"/>
<dbReference type="OrthoDB" id="9792692at2"/>
<dbReference type="UniPathway" id="UPA00053">
    <property type="reaction ID" value="UER00087"/>
</dbReference>
<dbReference type="Proteomes" id="UP000001203">
    <property type="component" value="Chromosome circular"/>
</dbReference>
<dbReference type="GO" id="GO:0005829">
    <property type="term" value="C:cytosol"/>
    <property type="evidence" value="ECO:0007669"/>
    <property type="project" value="TreeGrafter"/>
</dbReference>
<dbReference type="GO" id="GO:0050661">
    <property type="term" value="F:NADP binding"/>
    <property type="evidence" value="ECO:0007669"/>
    <property type="project" value="InterPro"/>
</dbReference>
<dbReference type="GO" id="GO:0004764">
    <property type="term" value="F:shikimate 3-dehydrogenase (NADP+) activity"/>
    <property type="evidence" value="ECO:0007669"/>
    <property type="project" value="UniProtKB-UniRule"/>
</dbReference>
<dbReference type="GO" id="GO:0008652">
    <property type="term" value="P:amino acid biosynthetic process"/>
    <property type="evidence" value="ECO:0007669"/>
    <property type="project" value="UniProtKB-KW"/>
</dbReference>
<dbReference type="GO" id="GO:0009073">
    <property type="term" value="P:aromatic amino acid family biosynthetic process"/>
    <property type="evidence" value="ECO:0007669"/>
    <property type="project" value="UniProtKB-KW"/>
</dbReference>
<dbReference type="GO" id="GO:0009423">
    <property type="term" value="P:chorismate biosynthetic process"/>
    <property type="evidence" value="ECO:0007669"/>
    <property type="project" value="UniProtKB-UniRule"/>
</dbReference>
<dbReference type="GO" id="GO:0019632">
    <property type="term" value="P:shikimate metabolic process"/>
    <property type="evidence" value="ECO:0007669"/>
    <property type="project" value="InterPro"/>
</dbReference>
<dbReference type="CDD" id="cd01065">
    <property type="entry name" value="NAD_bind_Shikimate_DH"/>
    <property type="match status" value="1"/>
</dbReference>
<dbReference type="Gene3D" id="3.40.50.10860">
    <property type="entry name" value="Leucine Dehydrogenase, chain A, domain 1"/>
    <property type="match status" value="1"/>
</dbReference>
<dbReference type="Gene3D" id="3.40.50.720">
    <property type="entry name" value="NAD(P)-binding Rossmann-like Domain"/>
    <property type="match status" value="1"/>
</dbReference>
<dbReference type="HAMAP" id="MF_00222">
    <property type="entry name" value="Shikimate_DH_AroE"/>
    <property type="match status" value="1"/>
</dbReference>
<dbReference type="InterPro" id="IPR046346">
    <property type="entry name" value="Aminoacid_DH-like_N_sf"/>
</dbReference>
<dbReference type="InterPro" id="IPR036291">
    <property type="entry name" value="NAD(P)-bd_dom_sf"/>
</dbReference>
<dbReference type="InterPro" id="IPR041121">
    <property type="entry name" value="SDH_C"/>
</dbReference>
<dbReference type="InterPro" id="IPR011342">
    <property type="entry name" value="Shikimate_DH"/>
</dbReference>
<dbReference type="InterPro" id="IPR013708">
    <property type="entry name" value="Shikimate_DH-bd_N"/>
</dbReference>
<dbReference type="InterPro" id="IPR022893">
    <property type="entry name" value="Shikimate_DH_fam"/>
</dbReference>
<dbReference type="NCBIfam" id="TIGR00507">
    <property type="entry name" value="aroE"/>
    <property type="match status" value="1"/>
</dbReference>
<dbReference type="NCBIfam" id="NF001314">
    <property type="entry name" value="PRK00258.2-2"/>
    <property type="match status" value="1"/>
</dbReference>
<dbReference type="PANTHER" id="PTHR21089:SF1">
    <property type="entry name" value="BIFUNCTIONAL 3-DEHYDROQUINATE DEHYDRATASE_SHIKIMATE DEHYDROGENASE, CHLOROPLASTIC"/>
    <property type="match status" value="1"/>
</dbReference>
<dbReference type="PANTHER" id="PTHR21089">
    <property type="entry name" value="SHIKIMATE DEHYDROGENASE"/>
    <property type="match status" value="1"/>
</dbReference>
<dbReference type="Pfam" id="PF18317">
    <property type="entry name" value="SDH_C"/>
    <property type="match status" value="1"/>
</dbReference>
<dbReference type="Pfam" id="PF08501">
    <property type="entry name" value="Shikimate_dh_N"/>
    <property type="match status" value="1"/>
</dbReference>
<dbReference type="SUPFAM" id="SSF53223">
    <property type="entry name" value="Aminoacid dehydrogenase-like, N-terminal domain"/>
    <property type="match status" value="1"/>
</dbReference>
<dbReference type="SUPFAM" id="SSF51735">
    <property type="entry name" value="NAD(P)-binding Rossmann-fold domains"/>
    <property type="match status" value="1"/>
</dbReference>
<proteinExistence type="inferred from homology"/>
<reference key="1">
    <citation type="journal article" date="2008" name="Proc. Natl. Acad. Sci. U.S.A.">
        <title>The genome of Cyanothece 51142, a unicellular diazotrophic cyanobacterium important in the marine nitrogen cycle.</title>
        <authorList>
            <person name="Welsh E.A."/>
            <person name="Liberton M."/>
            <person name="Stoeckel J."/>
            <person name="Loh T."/>
            <person name="Elvitigala T."/>
            <person name="Wang C."/>
            <person name="Wollam A."/>
            <person name="Fulton R.S."/>
            <person name="Clifton S.W."/>
            <person name="Jacobs J.M."/>
            <person name="Aurora R."/>
            <person name="Ghosh B.K."/>
            <person name="Sherman L.A."/>
            <person name="Smith R.D."/>
            <person name="Wilson R.K."/>
            <person name="Pakrasi H.B."/>
        </authorList>
    </citation>
    <scope>NUCLEOTIDE SEQUENCE [LARGE SCALE GENOMIC DNA]</scope>
    <source>
        <strain>ATCC 51142 / BH68</strain>
    </source>
</reference>
<organism>
    <name type="scientific">Crocosphaera subtropica (strain ATCC 51142 / BH68)</name>
    <name type="common">Cyanothece sp. (strain ATCC 51142)</name>
    <dbReference type="NCBI Taxonomy" id="43989"/>
    <lineage>
        <taxon>Bacteria</taxon>
        <taxon>Bacillati</taxon>
        <taxon>Cyanobacteriota</taxon>
        <taxon>Cyanophyceae</taxon>
        <taxon>Oscillatoriophycideae</taxon>
        <taxon>Chroococcales</taxon>
        <taxon>Aphanothecaceae</taxon>
        <taxon>Crocosphaera</taxon>
        <taxon>Crocosphaera subtropica</taxon>
    </lineage>
</organism>
<keyword id="KW-0028">Amino-acid biosynthesis</keyword>
<keyword id="KW-0057">Aromatic amino acid biosynthesis</keyword>
<keyword id="KW-0521">NADP</keyword>
<keyword id="KW-0560">Oxidoreductase</keyword>
<keyword id="KW-1185">Reference proteome</keyword>
<name>AROE_CROS5</name>
<gene>
    <name evidence="1" type="primary">aroE</name>
    <name type="ordered locus">cce_4473</name>
</gene>
<sequence>MSIITGKTKLLGIIGHPVEHSLSPVMQNAEIKRLGVDYIYIPFPVKPENLETALDGFATIGVMGFNATIPHKQAIIPLLSEVTTTAKLVGAVNTVWRTEIGWKGTNTDVIGFVTPLKALNRDWNTIKPIILGNGGAARAVVVGLAELGCRDICVVGRDKDKLGQFKQSWDTSELQASITVHSWDELSGMVSESQLIVNTTPIGMFPHTQNSPVDSNLWEKLPNNAIAYDLIYNPSPTQFLKDAKQQGLTVIDGLDMLVYQGAAALEIWLQQPVSATVMSEALKQSLFS</sequence>
<feature type="chain" id="PRO_1000100113" description="Shikimate dehydrogenase (NADP(+))">
    <location>
        <begin position="1"/>
        <end position="288"/>
    </location>
</feature>
<feature type="active site" description="Proton acceptor" evidence="1">
    <location>
        <position position="72"/>
    </location>
</feature>
<feature type="binding site" evidence="1">
    <location>
        <begin position="21"/>
        <end position="23"/>
    </location>
    <ligand>
        <name>shikimate</name>
        <dbReference type="ChEBI" id="CHEBI:36208"/>
    </ligand>
</feature>
<feature type="binding site" evidence="1">
    <location>
        <position position="68"/>
    </location>
    <ligand>
        <name>shikimate</name>
        <dbReference type="ChEBI" id="CHEBI:36208"/>
    </ligand>
</feature>
<feature type="binding site" evidence="1">
    <location>
        <position position="93"/>
    </location>
    <ligand>
        <name>shikimate</name>
        <dbReference type="ChEBI" id="CHEBI:36208"/>
    </ligand>
</feature>
<feature type="binding site" evidence="1">
    <location>
        <position position="108"/>
    </location>
    <ligand>
        <name>shikimate</name>
        <dbReference type="ChEBI" id="CHEBI:36208"/>
    </ligand>
</feature>
<feature type="binding site" evidence="1">
    <location>
        <begin position="132"/>
        <end position="136"/>
    </location>
    <ligand>
        <name>NADP(+)</name>
        <dbReference type="ChEBI" id="CHEBI:58349"/>
    </ligand>
</feature>
<feature type="binding site" evidence="1">
    <location>
        <position position="230"/>
    </location>
    <ligand>
        <name>NADP(+)</name>
        <dbReference type="ChEBI" id="CHEBI:58349"/>
    </ligand>
</feature>
<feature type="binding site" evidence="1">
    <location>
        <position position="232"/>
    </location>
    <ligand>
        <name>shikimate</name>
        <dbReference type="ChEBI" id="CHEBI:36208"/>
    </ligand>
</feature>
<feature type="binding site" evidence="1">
    <location>
        <position position="253"/>
    </location>
    <ligand>
        <name>NADP(+)</name>
        <dbReference type="ChEBI" id="CHEBI:58349"/>
    </ligand>
</feature>